<proteinExistence type="evidence at protein level"/>
<organism>
    <name type="scientific">Mus musculus</name>
    <name type="common">Mouse</name>
    <dbReference type="NCBI Taxonomy" id="10090"/>
    <lineage>
        <taxon>Eukaryota</taxon>
        <taxon>Metazoa</taxon>
        <taxon>Chordata</taxon>
        <taxon>Craniata</taxon>
        <taxon>Vertebrata</taxon>
        <taxon>Euteleostomi</taxon>
        <taxon>Mammalia</taxon>
        <taxon>Eutheria</taxon>
        <taxon>Euarchontoglires</taxon>
        <taxon>Glires</taxon>
        <taxon>Rodentia</taxon>
        <taxon>Myomorpha</taxon>
        <taxon>Muroidea</taxon>
        <taxon>Muridae</taxon>
        <taxon>Murinae</taxon>
        <taxon>Mus</taxon>
        <taxon>Mus</taxon>
    </lineage>
</organism>
<accession>Q8K3F7</accession>
<accession>Q6PD91</accession>
<accession>Q9JLU3</accession>
<evidence type="ECO:0000250" key="1">
    <source>
        <dbReference type="UniProtKB" id="Q8MIR0"/>
    </source>
</evidence>
<evidence type="ECO:0000255" key="2"/>
<evidence type="ECO:0000269" key="3">
    <source>
    </source>
</evidence>
<evidence type="ECO:0000305" key="4"/>
<evidence type="ECO:0000305" key="5">
    <source>
    </source>
</evidence>
<evidence type="ECO:0000312" key="6">
    <source>
        <dbReference type="EMBL" id="AAH58860.1"/>
    </source>
</evidence>
<evidence type="ECO:0000312" key="7">
    <source>
        <dbReference type="EMBL" id="AAM51557.1"/>
    </source>
</evidence>
<evidence type="ECO:0000312" key="8">
    <source>
        <dbReference type="EMBL" id="BAC36870.1"/>
    </source>
</evidence>
<evidence type="ECO:0000312" key="9">
    <source>
        <dbReference type="MGI" id="MGI:1926231"/>
    </source>
</evidence>
<evidence type="ECO:0007744" key="10">
    <source>
        <dbReference type="PDB" id="4YR9"/>
    </source>
</evidence>
<evidence type="ECO:0007744" key="11">
    <source>
        <dbReference type="PDB" id="4YRA"/>
    </source>
</evidence>
<evidence type="ECO:0007744" key="12">
    <source>
        <dbReference type="PDB" id="4YRB"/>
    </source>
</evidence>
<evidence type="ECO:0007829" key="13">
    <source>
        <dbReference type="PDB" id="4YR9"/>
    </source>
</evidence>
<evidence type="ECO:0007829" key="14">
    <source>
        <dbReference type="PDB" id="4YRA"/>
    </source>
</evidence>
<reference evidence="7" key="1">
    <citation type="journal article" date="2002" name="BMC Biochem.">
        <title>Molecular cloning and tissue distribution of mammalian L-threonine 3-dehydrogenases.</title>
        <authorList>
            <person name="Edgar A.J."/>
        </authorList>
    </citation>
    <scope>NUCLEOTIDE SEQUENCE [MRNA]</scope>
    <source>
        <strain evidence="7">BALB/cJ</strain>
        <tissue evidence="7">Liver</tissue>
    </source>
</reference>
<reference evidence="8" key="2">
    <citation type="journal article" date="2005" name="Science">
        <title>The transcriptional landscape of the mammalian genome.</title>
        <authorList>
            <person name="Carninci P."/>
            <person name="Kasukawa T."/>
            <person name="Katayama S."/>
            <person name="Gough J."/>
            <person name="Frith M.C."/>
            <person name="Maeda N."/>
            <person name="Oyama R."/>
            <person name="Ravasi T."/>
            <person name="Lenhard B."/>
            <person name="Wells C."/>
            <person name="Kodzius R."/>
            <person name="Shimokawa K."/>
            <person name="Bajic V.B."/>
            <person name="Brenner S.E."/>
            <person name="Batalov S."/>
            <person name="Forrest A.R."/>
            <person name="Zavolan M."/>
            <person name="Davis M.J."/>
            <person name="Wilming L.G."/>
            <person name="Aidinis V."/>
            <person name="Allen J.E."/>
            <person name="Ambesi-Impiombato A."/>
            <person name="Apweiler R."/>
            <person name="Aturaliya R.N."/>
            <person name="Bailey T.L."/>
            <person name="Bansal M."/>
            <person name="Baxter L."/>
            <person name="Beisel K.W."/>
            <person name="Bersano T."/>
            <person name="Bono H."/>
            <person name="Chalk A.M."/>
            <person name="Chiu K.P."/>
            <person name="Choudhary V."/>
            <person name="Christoffels A."/>
            <person name="Clutterbuck D.R."/>
            <person name="Crowe M.L."/>
            <person name="Dalla E."/>
            <person name="Dalrymple B.P."/>
            <person name="de Bono B."/>
            <person name="Della Gatta G."/>
            <person name="di Bernardo D."/>
            <person name="Down T."/>
            <person name="Engstrom P."/>
            <person name="Fagiolini M."/>
            <person name="Faulkner G."/>
            <person name="Fletcher C.F."/>
            <person name="Fukushima T."/>
            <person name="Furuno M."/>
            <person name="Futaki S."/>
            <person name="Gariboldi M."/>
            <person name="Georgii-Hemming P."/>
            <person name="Gingeras T.R."/>
            <person name="Gojobori T."/>
            <person name="Green R.E."/>
            <person name="Gustincich S."/>
            <person name="Harbers M."/>
            <person name="Hayashi Y."/>
            <person name="Hensch T.K."/>
            <person name="Hirokawa N."/>
            <person name="Hill D."/>
            <person name="Huminiecki L."/>
            <person name="Iacono M."/>
            <person name="Ikeo K."/>
            <person name="Iwama A."/>
            <person name="Ishikawa T."/>
            <person name="Jakt M."/>
            <person name="Kanapin A."/>
            <person name="Katoh M."/>
            <person name="Kawasawa Y."/>
            <person name="Kelso J."/>
            <person name="Kitamura H."/>
            <person name="Kitano H."/>
            <person name="Kollias G."/>
            <person name="Krishnan S.P."/>
            <person name="Kruger A."/>
            <person name="Kummerfeld S.K."/>
            <person name="Kurochkin I.V."/>
            <person name="Lareau L.F."/>
            <person name="Lazarevic D."/>
            <person name="Lipovich L."/>
            <person name="Liu J."/>
            <person name="Liuni S."/>
            <person name="McWilliam S."/>
            <person name="Madan Babu M."/>
            <person name="Madera M."/>
            <person name="Marchionni L."/>
            <person name="Matsuda H."/>
            <person name="Matsuzawa S."/>
            <person name="Miki H."/>
            <person name="Mignone F."/>
            <person name="Miyake S."/>
            <person name="Morris K."/>
            <person name="Mottagui-Tabar S."/>
            <person name="Mulder N."/>
            <person name="Nakano N."/>
            <person name="Nakauchi H."/>
            <person name="Ng P."/>
            <person name="Nilsson R."/>
            <person name="Nishiguchi S."/>
            <person name="Nishikawa S."/>
            <person name="Nori F."/>
            <person name="Ohara O."/>
            <person name="Okazaki Y."/>
            <person name="Orlando V."/>
            <person name="Pang K.C."/>
            <person name="Pavan W.J."/>
            <person name="Pavesi G."/>
            <person name="Pesole G."/>
            <person name="Petrovsky N."/>
            <person name="Piazza S."/>
            <person name="Reed J."/>
            <person name="Reid J.F."/>
            <person name="Ring B.Z."/>
            <person name="Ringwald M."/>
            <person name="Rost B."/>
            <person name="Ruan Y."/>
            <person name="Salzberg S.L."/>
            <person name="Sandelin A."/>
            <person name="Schneider C."/>
            <person name="Schoenbach C."/>
            <person name="Sekiguchi K."/>
            <person name="Semple C.A."/>
            <person name="Seno S."/>
            <person name="Sessa L."/>
            <person name="Sheng Y."/>
            <person name="Shibata Y."/>
            <person name="Shimada H."/>
            <person name="Shimada K."/>
            <person name="Silva D."/>
            <person name="Sinclair B."/>
            <person name="Sperling S."/>
            <person name="Stupka E."/>
            <person name="Sugiura K."/>
            <person name="Sultana R."/>
            <person name="Takenaka Y."/>
            <person name="Taki K."/>
            <person name="Tammoja K."/>
            <person name="Tan S.L."/>
            <person name="Tang S."/>
            <person name="Taylor M.S."/>
            <person name="Tegner J."/>
            <person name="Teichmann S.A."/>
            <person name="Ueda H.R."/>
            <person name="van Nimwegen E."/>
            <person name="Verardo R."/>
            <person name="Wei C.L."/>
            <person name="Yagi K."/>
            <person name="Yamanishi H."/>
            <person name="Zabarovsky E."/>
            <person name="Zhu S."/>
            <person name="Zimmer A."/>
            <person name="Hide W."/>
            <person name="Bult C."/>
            <person name="Grimmond S.M."/>
            <person name="Teasdale R.D."/>
            <person name="Liu E.T."/>
            <person name="Brusic V."/>
            <person name="Quackenbush J."/>
            <person name="Wahlestedt C."/>
            <person name="Mattick J.S."/>
            <person name="Hume D.A."/>
            <person name="Kai C."/>
            <person name="Sasaki D."/>
            <person name="Tomaru Y."/>
            <person name="Fukuda S."/>
            <person name="Kanamori-Katayama M."/>
            <person name="Suzuki M."/>
            <person name="Aoki J."/>
            <person name="Arakawa T."/>
            <person name="Iida J."/>
            <person name="Imamura K."/>
            <person name="Itoh M."/>
            <person name="Kato T."/>
            <person name="Kawaji H."/>
            <person name="Kawagashira N."/>
            <person name="Kawashima T."/>
            <person name="Kojima M."/>
            <person name="Kondo S."/>
            <person name="Konno H."/>
            <person name="Nakano K."/>
            <person name="Ninomiya N."/>
            <person name="Nishio T."/>
            <person name="Okada M."/>
            <person name="Plessy C."/>
            <person name="Shibata K."/>
            <person name="Shiraki T."/>
            <person name="Suzuki S."/>
            <person name="Tagami M."/>
            <person name="Waki K."/>
            <person name="Watahiki A."/>
            <person name="Okamura-Oho Y."/>
            <person name="Suzuki H."/>
            <person name="Kawai J."/>
            <person name="Hayashizaki Y."/>
        </authorList>
    </citation>
    <scope>NUCLEOTIDE SEQUENCE [LARGE SCALE MRNA]</scope>
    <source>
        <strain evidence="8">C57BL/6J</strain>
        <tissue evidence="8">Embryo</tissue>
    </source>
</reference>
<reference evidence="6" key="3">
    <citation type="journal article" date="2004" name="Genome Res.">
        <title>The status, quality, and expansion of the NIH full-length cDNA project: the Mammalian Gene Collection (MGC).</title>
        <authorList>
            <consortium name="The MGC Project Team"/>
        </authorList>
    </citation>
    <scope>NUCLEOTIDE SEQUENCE [LARGE SCALE MRNA]</scope>
    <source>
        <strain evidence="6">C57BL/6J</strain>
        <tissue evidence="6">Embryo</tissue>
    </source>
</reference>
<reference evidence="10 11 12" key="4">
    <citation type="journal article" date="2015" name="J. Struct. Biol.">
        <title>Structural insights on mouse L-threonine dehydrogenase: A regulatory role of Arg180 in catalysis.</title>
        <authorList>
            <person name="He C."/>
            <person name="Huang X."/>
            <person name="Liu Y."/>
            <person name="Li F."/>
            <person name="Yang Y."/>
            <person name="Tao H."/>
            <person name="Han C."/>
            <person name="Zhao C."/>
            <person name="Xiao Y."/>
            <person name="Shi Y."/>
        </authorList>
    </citation>
    <scope>X-RAY CRYSTALLOGRAPHY (2.65 ANGSTROMS) OF 47-373 OF WILD-TYPE AND VARIANT LYS-180 IN COMPLEX WITH NAD</scope>
    <scope>FUNCTION</scope>
    <scope>CATALYTIC ACTIVITY</scope>
    <scope>PATHWAY</scope>
    <scope>SUBUNIT</scope>
    <scope>BIOPHYSICOCHEMICAL PROPERTIES</scope>
    <scope>ACTIVE SITE</scope>
    <scope>MUTAGENESIS OF SER-133; ARG-180; THR-237 AND MET-333</scope>
</reference>
<sequence length="373" mass="41462">MLFLGMLKQVVNGTAQSKASSCRKLVLPLKFLGTSQHRIPADANFHSTSISEAEPPRVLITGGLGQLGVGLANLLRKRFGKDNVILSDIRKPPAHVFHSGPFVYANILDYKSLREIVVNHRISWLFHYSALLSAVGEANVSLARDVNITGLHNVLDVAAEYNVRLFVPSTIGAFGPTSPRNPAPDLCIQRPRTIYGVSKVHTELMGEYYYYRYGLDFRCLRYPGIISADSQPGGGTTDYAVQIFHAAAKNGTFECNLEAGTRLPMMYISDCLRATLEVMEAPAERLSMRTYNISAMSFTPEELAQALRKHAPDFQITYCVDPLRQAIAESWPMILDDSNARKDWGWKHDFDLPELVATMLNFHGVSTRVAQVN</sequence>
<dbReference type="EC" id="1.1.1.103" evidence="3"/>
<dbReference type="EMBL" id="AF134346">
    <property type="protein sequence ID" value="AAF61395.2"/>
    <property type="molecule type" value="mRNA"/>
</dbReference>
<dbReference type="EMBL" id="AY116662">
    <property type="protein sequence ID" value="AAM51557.1"/>
    <property type="molecule type" value="mRNA"/>
</dbReference>
<dbReference type="EMBL" id="AK077571">
    <property type="protein sequence ID" value="BAC36870.1"/>
    <property type="molecule type" value="mRNA"/>
</dbReference>
<dbReference type="EMBL" id="BC058860">
    <property type="protein sequence ID" value="AAH58860.1"/>
    <property type="molecule type" value="mRNA"/>
</dbReference>
<dbReference type="CCDS" id="CCDS27202.1"/>
<dbReference type="RefSeq" id="NP_067455.5">
    <property type="nucleotide sequence ID" value="NM_021480.5"/>
</dbReference>
<dbReference type="PDB" id="4YR9">
    <property type="method" value="X-ray"/>
    <property type="resolution" value="2.80 A"/>
    <property type="chains" value="A/B/C/D/E/F=47-373"/>
</dbReference>
<dbReference type="PDB" id="4YRA">
    <property type="method" value="X-ray"/>
    <property type="resolution" value="2.65 A"/>
    <property type="chains" value="A/B/C/D/E/F/G/H/I/J/K/L=47-373"/>
</dbReference>
<dbReference type="PDB" id="4YRB">
    <property type="method" value="X-ray"/>
    <property type="resolution" value="3.25 A"/>
    <property type="chains" value="A/B/C/D/E/F=47-373"/>
</dbReference>
<dbReference type="PDBsum" id="4YR9"/>
<dbReference type="PDBsum" id="4YRA"/>
<dbReference type="PDBsum" id="4YRB"/>
<dbReference type="SMR" id="Q8K3F7"/>
<dbReference type="BioGRID" id="208451">
    <property type="interactions" value="4"/>
</dbReference>
<dbReference type="FunCoup" id="Q8K3F7">
    <property type="interactions" value="478"/>
</dbReference>
<dbReference type="STRING" id="10090.ENSMUSP00000022522"/>
<dbReference type="GlyGen" id="Q8K3F7">
    <property type="glycosylation" value="1 site"/>
</dbReference>
<dbReference type="iPTMnet" id="Q8K3F7"/>
<dbReference type="PhosphoSitePlus" id="Q8K3F7"/>
<dbReference type="PaxDb" id="10090-ENSMUSP00000022522"/>
<dbReference type="PeptideAtlas" id="Q8K3F7"/>
<dbReference type="ProteomicsDB" id="262738"/>
<dbReference type="DNASU" id="58865"/>
<dbReference type="Ensembl" id="ENSMUST00000022522.15">
    <property type="protein sequence ID" value="ENSMUSP00000022522.9"/>
    <property type="gene ID" value="ENSMUSG00000021953.15"/>
</dbReference>
<dbReference type="GeneID" id="58865"/>
<dbReference type="KEGG" id="mmu:58865"/>
<dbReference type="UCSC" id="uc007uhs.1">
    <property type="organism name" value="mouse"/>
</dbReference>
<dbReference type="AGR" id="MGI:1926231"/>
<dbReference type="CTD" id="157739"/>
<dbReference type="MGI" id="MGI:1926231">
    <property type="gene designation" value="Tdh"/>
</dbReference>
<dbReference type="VEuPathDB" id="HostDB:ENSMUSG00000021953"/>
<dbReference type="eggNOG" id="KOG2774">
    <property type="taxonomic scope" value="Eukaryota"/>
</dbReference>
<dbReference type="GeneTree" id="ENSGT00390000014037"/>
<dbReference type="HOGENOM" id="CLU_007383_19_1_1"/>
<dbReference type="InParanoid" id="Q8K3F7"/>
<dbReference type="OMA" id="HWHASPR"/>
<dbReference type="OrthoDB" id="10058185at2759"/>
<dbReference type="PhylomeDB" id="Q8K3F7"/>
<dbReference type="TreeFam" id="TF314544"/>
<dbReference type="BRENDA" id="1.1.1.103">
    <property type="organism ID" value="3474"/>
</dbReference>
<dbReference type="UniPathway" id="UPA00046">
    <property type="reaction ID" value="UER00505"/>
</dbReference>
<dbReference type="BioGRID-ORCS" id="58865">
    <property type="hits" value="2 hits in 75 CRISPR screens"/>
</dbReference>
<dbReference type="ChiTaRS" id="Tdh">
    <property type="organism name" value="mouse"/>
</dbReference>
<dbReference type="EvolutionaryTrace" id="Q8K3F7"/>
<dbReference type="PRO" id="PR:Q8K3F7"/>
<dbReference type="Proteomes" id="UP000000589">
    <property type="component" value="Chromosome 14"/>
</dbReference>
<dbReference type="RNAct" id="Q8K3F7">
    <property type="molecule type" value="protein"/>
</dbReference>
<dbReference type="Bgee" id="ENSMUSG00000021953">
    <property type="expression patterns" value="Expressed in yolk sac and 38 other cell types or tissues"/>
</dbReference>
<dbReference type="ExpressionAtlas" id="Q8K3F7">
    <property type="expression patterns" value="baseline and differential"/>
</dbReference>
<dbReference type="GO" id="GO:0005739">
    <property type="term" value="C:mitochondrion"/>
    <property type="evidence" value="ECO:0007005"/>
    <property type="project" value="MGI"/>
</dbReference>
<dbReference type="GO" id="GO:0042802">
    <property type="term" value="F:identical protein binding"/>
    <property type="evidence" value="ECO:0000314"/>
    <property type="project" value="UniProtKB"/>
</dbReference>
<dbReference type="GO" id="GO:0008743">
    <property type="term" value="F:L-threonine 3-dehydrogenase activity"/>
    <property type="evidence" value="ECO:0000314"/>
    <property type="project" value="UniProtKB"/>
</dbReference>
<dbReference type="GO" id="GO:0019518">
    <property type="term" value="P:L-threonine catabolic process to glycine"/>
    <property type="evidence" value="ECO:0007669"/>
    <property type="project" value="UniProtKB-UniPathway"/>
</dbReference>
<dbReference type="GO" id="GO:0006567">
    <property type="term" value="P:threonine catabolic process"/>
    <property type="evidence" value="ECO:0000314"/>
    <property type="project" value="UniProtKB"/>
</dbReference>
<dbReference type="CDD" id="cd05272">
    <property type="entry name" value="TDH_SDR_e"/>
    <property type="match status" value="1"/>
</dbReference>
<dbReference type="FunFam" id="3.40.50.720:FF:000077">
    <property type="entry name" value="L-threonine 3-dehydrogenase, mitochondrial"/>
    <property type="match status" value="1"/>
</dbReference>
<dbReference type="Gene3D" id="3.40.50.720">
    <property type="entry name" value="NAD(P)-binding Rossmann-like Domain"/>
    <property type="match status" value="1"/>
</dbReference>
<dbReference type="InterPro" id="IPR001509">
    <property type="entry name" value="Epimerase_deHydtase"/>
</dbReference>
<dbReference type="InterPro" id="IPR036291">
    <property type="entry name" value="NAD(P)-bd_dom_sf"/>
</dbReference>
<dbReference type="InterPro" id="IPR051225">
    <property type="entry name" value="NAD(P)_epim/dehydratase"/>
</dbReference>
<dbReference type="PANTHER" id="PTHR42687">
    <property type="entry name" value="L-THREONINE 3-DEHYDROGENASE"/>
    <property type="match status" value="1"/>
</dbReference>
<dbReference type="PANTHER" id="PTHR42687:SF1">
    <property type="entry name" value="L-THREONINE 3-DEHYDROGENASE, MITOCHONDRIAL"/>
    <property type="match status" value="1"/>
</dbReference>
<dbReference type="Pfam" id="PF01370">
    <property type="entry name" value="Epimerase"/>
    <property type="match status" value="1"/>
</dbReference>
<dbReference type="SUPFAM" id="SSF51735">
    <property type="entry name" value="NAD(P)-binding Rossmann-fold domains"/>
    <property type="match status" value="1"/>
</dbReference>
<protein>
    <recommendedName>
        <fullName evidence="4">L-threonine 3-dehydrogenase, mitochondrial</fullName>
        <ecNumber evidence="3">1.1.1.103</ecNumber>
    </recommendedName>
</protein>
<gene>
    <name evidence="9" type="primary">Tdh</name>
</gene>
<feature type="transit peptide" description="Mitochondrion" evidence="2">
    <location>
        <begin position="1"/>
        <end status="unknown"/>
    </location>
</feature>
<feature type="chain" id="PRO_0000298784" description="L-threonine 3-dehydrogenase, mitochondrial">
    <location>
        <begin status="unknown"/>
        <end position="373"/>
    </location>
</feature>
<feature type="active site" description="Proton donor/acceptor" evidence="5">
    <location>
        <position position="195"/>
    </location>
</feature>
<feature type="binding site" evidence="3 10 11 12">
    <location>
        <begin position="62"/>
        <end position="67"/>
    </location>
    <ligand>
        <name>NAD(+)</name>
        <dbReference type="ChEBI" id="CHEBI:57540"/>
    </ligand>
</feature>
<feature type="binding site" evidence="3 10 11 12">
    <location>
        <begin position="88"/>
        <end position="90"/>
    </location>
    <ligand>
        <name>NAD(+)</name>
        <dbReference type="ChEBI" id="CHEBI:57540"/>
    </ligand>
</feature>
<feature type="binding site" evidence="3 10 11 12">
    <location>
        <begin position="106"/>
        <end position="107"/>
    </location>
    <ligand>
        <name>NAD(+)</name>
        <dbReference type="ChEBI" id="CHEBI:57540"/>
    </ligand>
</feature>
<feature type="binding site" evidence="3 10 11 12">
    <location>
        <position position="195"/>
    </location>
    <ligand>
        <name>NAD(+)</name>
        <dbReference type="ChEBI" id="CHEBI:57540"/>
    </ligand>
</feature>
<feature type="binding site" evidence="3 10 11 12">
    <location>
        <position position="199"/>
    </location>
    <ligand>
        <name>NAD(+)</name>
        <dbReference type="ChEBI" id="CHEBI:57540"/>
    </ligand>
</feature>
<feature type="binding site" evidence="3 10 11 12">
    <location>
        <position position="225"/>
    </location>
    <ligand>
        <name>NAD(+)</name>
        <dbReference type="ChEBI" id="CHEBI:57540"/>
    </ligand>
</feature>
<feature type="mutagenesis site" description="Decreased L-threonine 3-dehydrogenase activity." evidence="3">
    <original>S</original>
    <variation>A</variation>
    <location>
        <position position="133"/>
    </location>
</feature>
<feature type="mutagenesis site" description="Decreased L-threonine 3-dehydrogenase activity. No effect on protein NAD(+)-binding. No gross effect on protein folding. No effect on protein stability." evidence="3">
    <original>R</original>
    <variation>K</variation>
    <location>
        <position position="180"/>
    </location>
</feature>
<feature type="mutagenesis site" description="Decreased L-threonine 3-dehydrogenase activity." evidence="3">
    <original>T</original>
    <variation>A</variation>
    <location>
        <position position="237"/>
    </location>
</feature>
<feature type="mutagenesis site" description="Decreased L-threonine 3-dehydrogenase activity." evidence="3">
    <original>M</original>
    <variation>A</variation>
    <location>
        <position position="333"/>
    </location>
</feature>
<feature type="mutagenesis site" description="Decreased L-threonine 3-dehydrogenase activity. Decreased affinity for L-threonine." evidence="3">
    <original>M</original>
    <variation>E</variation>
    <location>
        <position position="333"/>
    </location>
</feature>
<feature type="sequence conflict" description="In Ref. 3; AAH58860." evidence="4" ref="3">
    <original>D</original>
    <variation>N</variation>
    <location>
        <position position="82"/>
    </location>
</feature>
<feature type="sequence conflict" description="In Ref. 1; AAF61395." evidence="4" ref="1">
    <original>G</original>
    <variation>V</variation>
    <location>
        <position position="214"/>
    </location>
</feature>
<feature type="sequence conflict" description="In Ref. 1; AAF61395." evidence="4" ref="1">
    <original>P</original>
    <variation>R</variation>
    <location>
        <position position="232"/>
    </location>
</feature>
<feature type="sequence conflict" description="In Ref. 3; AAH58860." evidence="4" ref="3">
    <original>Y</original>
    <variation>H</variation>
    <location>
        <position position="318"/>
    </location>
</feature>
<feature type="sequence conflict" description="In Ref. 1; AAF61395." evidence="4" ref="1">
    <original>N</original>
    <variation>S</variation>
    <location>
        <position position="361"/>
    </location>
</feature>
<feature type="strand" evidence="14">
    <location>
        <begin position="58"/>
        <end position="61"/>
    </location>
</feature>
<feature type="turn" evidence="14">
    <location>
        <begin position="62"/>
        <end position="64"/>
    </location>
</feature>
<feature type="helix" evidence="14">
    <location>
        <begin position="66"/>
        <end position="79"/>
    </location>
</feature>
<feature type="helix" evidence="14">
    <location>
        <begin position="81"/>
        <end position="83"/>
    </location>
</feature>
<feature type="strand" evidence="14">
    <location>
        <begin position="84"/>
        <end position="88"/>
    </location>
</feature>
<feature type="helix" evidence="13">
    <location>
        <begin position="94"/>
        <end position="97"/>
    </location>
</feature>
<feature type="strand" evidence="14">
    <location>
        <begin position="102"/>
        <end position="104"/>
    </location>
</feature>
<feature type="helix" evidence="14">
    <location>
        <begin position="110"/>
        <end position="119"/>
    </location>
</feature>
<feature type="strand" evidence="14">
    <location>
        <begin position="124"/>
        <end position="127"/>
    </location>
</feature>
<feature type="helix" evidence="13">
    <location>
        <begin position="133"/>
        <end position="138"/>
    </location>
</feature>
<feature type="helix" evidence="14">
    <location>
        <begin position="146"/>
        <end position="160"/>
    </location>
</feature>
<feature type="strand" evidence="14">
    <location>
        <begin position="164"/>
        <end position="166"/>
    </location>
</feature>
<feature type="helix" evidence="14">
    <location>
        <begin position="171"/>
        <end position="173"/>
    </location>
</feature>
<feature type="strand" evidence="14">
    <location>
        <begin position="181"/>
        <end position="183"/>
    </location>
</feature>
<feature type="strand" evidence="13">
    <location>
        <begin position="185"/>
        <end position="187"/>
    </location>
</feature>
<feature type="helix" evidence="14">
    <location>
        <begin position="194"/>
        <end position="212"/>
    </location>
</feature>
<feature type="strand" evidence="14">
    <location>
        <begin position="217"/>
        <end position="222"/>
    </location>
</feature>
<feature type="strand" evidence="14">
    <location>
        <begin position="224"/>
        <end position="226"/>
    </location>
</feature>
<feature type="helix" evidence="13">
    <location>
        <begin position="236"/>
        <end position="238"/>
    </location>
</feature>
<feature type="helix" evidence="14">
    <location>
        <begin position="239"/>
        <end position="248"/>
    </location>
</feature>
<feature type="strand" evidence="14">
    <location>
        <begin position="252"/>
        <end position="257"/>
    </location>
</feature>
<feature type="strand" evidence="14">
    <location>
        <begin position="263"/>
        <end position="267"/>
    </location>
</feature>
<feature type="helix" evidence="14">
    <location>
        <begin position="268"/>
        <end position="280"/>
    </location>
</feature>
<feature type="helix" evidence="13">
    <location>
        <begin position="283"/>
        <end position="285"/>
    </location>
</feature>
<feature type="strand" evidence="14">
    <location>
        <begin position="289"/>
        <end position="292"/>
    </location>
</feature>
<feature type="strand" evidence="14">
    <location>
        <begin position="295"/>
        <end position="298"/>
    </location>
</feature>
<feature type="helix" evidence="14">
    <location>
        <begin position="300"/>
        <end position="308"/>
    </location>
</feature>
<feature type="strand" evidence="14">
    <location>
        <begin position="315"/>
        <end position="318"/>
    </location>
</feature>
<feature type="helix" evidence="14">
    <location>
        <begin position="322"/>
        <end position="330"/>
    </location>
</feature>
<feature type="helix" evidence="14">
    <location>
        <begin position="338"/>
        <end position="344"/>
    </location>
</feature>
<feature type="helix" evidence="14">
    <location>
        <begin position="352"/>
        <end position="362"/>
    </location>
</feature>
<comment type="function">
    <text evidence="3">Catalyzes the NAD(+)-dependent oxidation of L-threonine to 2-amino-3-ketobutyrate, mediating L-threonine catabolism.</text>
</comment>
<comment type="catalytic activity">
    <reaction evidence="3">
        <text>L-threonine + NAD(+) = (2S)-2-amino-3-oxobutanoate + NADH + H(+)</text>
        <dbReference type="Rhea" id="RHEA:13161"/>
        <dbReference type="ChEBI" id="CHEBI:15378"/>
        <dbReference type="ChEBI" id="CHEBI:57540"/>
        <dbReference type="ChEBI" id="CHEBI:57926"/>
        <dbReference type="ChEBI" id="CHEBI:57945"/>
        <dbReference type="ChEBI" id="CHEBI:78948"/>
        <dbReference type="EC" id="1.1.1.103"/>
    </reaction>
</comment>
<comment type="biophysicochemical properties">
    <kinetics>
        <KM evidence="3">72.4 mM for L-threonine</KM>
        <KM evidence="3">1.67 mM for NAD(+)</KM>
    </kinetics>
</comment>
<comment type="pathway">
    <text evidence="5">Amino-acid degradation; L-threonine degradation via oxydo-reductase pathway; glycine from L-threonine: step 1/2.</text>
</comment>
<comment type="subunit">
    <text evidence="5">Homodimer.</text>
</comment>
<comment type="subcellular location">
    <subcellularLocation>
        <location evidence="1">Mitochondrion</location>
    </subcellularLocation>
</comment>
<comment type="similarity">
    <text evidence="4">Belongs to the NAD(P)-dependent epimerase/dehydratase family.</text>
</comment>
<keyword id="KW-0002">3D-structure</keyword>
<keyword id="KW-0496">Mitochondrion</keyword>
<keyword id="KW-0520">NAD</keyword>
<keyword id="KW-0560">Oxidoreductase</keyword>
<keyword id="KW-1185">Reference proteome</keyword>
<keyword id="KW-0809">Transit peptide</keyword>
<name>TDH_MOUSE</name>